<reference key="1">
    <citation type="journal article" date="2005" name="Nature">
        <title>Sequencing of Aspergillus nidulans and comparative analysis with A. fumigatus and A. oryzae.</title>
        <authorList>
            <person name="Galagan J.E."/>
            <person name="Calvo S.E."/>
            <person name="Cuomo C."/>
            <person name="Ma L.-J."/>
            <person name="Wortman J.R."/>
            <person name="Batzoglou S."/>
            <person name="Lee S.-I."/>
            <person name="Bastuerkmen M."/>
            <person name="Spevak C.C."/>
            <person name="Clutterbuck J."/>
            <person name="Kapitonov V."/>
            <person name="Jurka J."/>
            <person name="Scazzocchio C."/>
            <person name="Farman M.L."/>
            <person name="Butler J."/>
            <person name="Purcell S."/>
            <person name="Harris S."/>
            <person name="Braus G.H."/>
            <person name="Draht O."/>
            <person name="Busch S."/>
            <person name="D'Enfert C."/>
            <person name="Bouchier C."/>
            <person name="Goldman G.H."/>
            <person name="Bell-Pedersen D."/>
            <person name="Griffiths-Jones S."/>
            <person name="Doonan J.H."/>
            <person name="Yu J."/>
            <person name="Vienken K."/>
            <person name="Pain A."/>
            <person name="Freitag M."/>
            <person name="Selker E.U."/>
            <person name="Archer D.B."/>
            <person name="Penalva M.A."/>
            <person name="Oakley B.R."/>
            <person name="Momany M."/>
            <person name="Tanaka T."/>
            <person name="Kumagai T."/>
            <person name="Asai K."/>
            <person name="Machida M."/>
            <person name="Nierman W.C."/>
            <person name="Denning D.W."/>
            <person name="Caddick M.X."/>
            <person name="Hynes M."/>
            <person name="Paoletti M."/>
            <person name="Fischer R."/>
            <person name="Miller B.L."/>
            <person name="Dyer P.S."/>
            <person name="Sachs M.S."/>
            <person name="Osmani S.A."/>
            <person name="Birren B.W."/>
        </authorList>
    </citation>
    <scope>NUCLEOTIDE SEQUENCE [LARGE SCALE GENOMIC DNA]</scope>
    <source>
        <strain>FGSC A4 / ATCC 38163 / CBS 112.46 / NRRL 194 / M139</strain>
    </source>
</reference>
<reference key="2">
    <citation type="journal article" date="2009" name="Fungal Genet. Biol.">
        <title>The 2008 update of the Aspergillus nidulans genome annotation: a community effort.</title>
        <authorList>
            <person name="Wortman J.R."/>
            <person name="Gilsenan J.M."/>
            <person name="Joardar V."/>
            <person name="Deegan J."/>
            <person name="Clutterbuck J."/>
            <person name="Andersen M.R."/>
            <person name="Archer D."/>
            <person name="Bencina M."/>
            <person name="Braus G."/>
            <person name="Coutinho P."/>
            <person name="von Dohren H."/>
            <person name="Doonan J."/>
            <person name="Driessen A.J."/>
            <person name="Durek P."/>
            <person name="Espeso E."/>
            <person name="Fekete E."/>
            <person name="Flipphi M."/>
            <person name="Estrada C.G."/>
            <person name="Geysens S."/>
            <person name="Goldman G."/>
            <person name="de Groot P.W."/>
            <person name="Hansen K."/>
            <person name="Harris S.D."/>
            <person name="Heinekamp T."/>
            <person name="Helmstaedt K."/>
            <person name="Henrissat B."/>
            <person name="Hofmann G."/>
            <person name="Homan T."/>
            <person name="Horio T."/>
            <person name="Horiuchi H."/>
            <person name="James S."/>
            <person name="Jones M."/>
            <person name="Karaffa L."/>
            <person name="Karanyi Z."/>
            <person name="Kato M."/>
            <person name="Keller N."/>
            <person name="Kelly D.E."/>
            <person name="Kiel J.A."/>
            <person name="Kim J.M."/>
            <person name="van der Klei I.J."/>
            <person name="Klis F.M."/>
            <person name="Kovalchuk A."/>
            <person name="Krasevec N."/>
            <person name="Kubicek C.P."/>
            <person name="Liu B."/>
            <person name="Maccabe A."/>
            <person name="Meyer V."/>
            <person name="Mirabito P."/>
            <person name="Miskei M."/>
            <person name="Mos M."/>
            <person name="Mullins J."/>
            <person name="Nelson D.R."/>
            <person name="Nielsen J."/>
            <person name="Oakley B.R."/>
            <person name="Osmani S.A."/>
            <person name="Pakula T."/>
            <person name="Paszewski A."/>
            <person name="Paulsen I."/>
            <person name="Pilsyk S."/>
            <person name="Pocsi I."/>
            <person name="Punt P.J."/>
            <person name="Ram A.F."/>
            <person name="Ren Q."/>
            <person name="Robellet X."/>
            <person name="Robson G."/>
            <person name="Seiboth B."/>
            <person name="van Solingen P."/>
            <person name="Specht T."/>
            <person name="Sun J."/>
            <person name="Taheri-Talesh N."/>
            <person name="Takeshita N."/>
            <person name="Ussery D."/>
            <person name="vanKuyk P.A."/>
            <person name="Visser H."/>
            <person name="van de Vondervoort P.J."/>
            <person name="de Vries R.P."/>
            <person name="Walton J."/>
            <person name="Xiang X."/>
            <person name="Xiong Y."/>
            <person name="Zeng A.P."/>
            <person name="Brandt B.W."/>
            <person name="Cornell M.J."/>
            <person name="van den Hondel C.A."/>
            <person name="Visser J."/>
            <person name="Oliver S.G."/>
            <person name="Turner G."/>
        </authorList>
    </citation>
    <scope>GENOME REANNOTATION</scope>
    <source>
        <strain>FGSC A4 / ATCC 38163 / CBS 112.46 / NRRL 194 / M139</strain>
    </source>
</reference>
<gene>
    <name type="ORF">AN4452-2</name>
    <name type="ORF">ANIA_04452-2</name>
</gene>
<proteinExistence type="inferred from homology"/>
<organism>
    <name type="scientific">Emericella nidulans (strain FGSC A4 / ATCC 38163 / CBS 112.46 / NRRL 194 / M139)</name>
    <name type="common">Aspergillus nidulans</name>
    <dbReference type="NCBI Taxonomy" id="227321"/>
    <lineage>
        <taxon>Eukaryota</taxon>
        <taxon>Fungi</taxon>
        <taxon>Dikarya</taxon>
        <taxon>Ascomycota</taxon>
        <taxon>Pezizomycotina</taxon>
        <taxon>Eurotiomycetes</taxon>
        <taxon>Eurotiomycetidae</taxon>
        <taxon>Eurotiales</taxon>
        <taxon>Aspergillaceae</taxon>
        <taxon>Aspergillus</taxon>
        <taxon>Aspergillus subgen. Nidulantes</taxon>
    </lineage>
</organism>
<protein>
    <recommendedName>
        <fullName evidence="3">Large ribosomal subunit protein eL36</fullName>
    </recommendedName>
    <alternativeName>
        <fullName evidence="3">60S ribosomal protein L36</fullName>
    </alternativeName>
</protein>
<keyword id="KW-0963">Cytoplasm</keyword>
<keyword id="KW-1185">Reference proteome</keyword>
<keyword id="KW-0687">Ribonucleoprotein</keyword>
<keyword id="KW-0689">Ribosomal protein</keyword>
<name>RL36_EMENI</name>
<comment type="function">
    <text evidence="1">Component of the ribosome, a large ribonucleoprotein complex responsible for the synthesis of proteins in the cell. The small ribosomal subunit (SSU) binds messenger RNAs (mRNAs) and translates the encoded message by selecting cognate aminoacyl-transfer RNA (tRNA) molecules (By similarity). The large subunit (LSU) contains the ribosomal catalytic site termed the peptidyl transferase center (PTC), which catalyzes the formation of peptide bonds, thereby polymerizing the amino acids delivered by tRNAs into a polypeptide chain (By similarity). The nascent polypeptides leave the ribosome through a tunnel in the LSU and interact with protein factors that function in enzymatic processing, targeting, and the membrane insertion of nascent chains at the exit of the ribosomal tunnel (By similarity).</text>
</comment>
<comment type="subunit">
    <text evidence="1">Component of the large ribosomal subunit (LSU).</text>
</comment>
<comment type="subcellular location">
    <subcellularLocation>
        <location evidence="1">Cytoplasm</location>
    </subcellularLocation>
</comment>
<comment type="similarity">
    <text evidence="3">Belongs to the eukaryotic ribosomal protein eL36 family.</text>
</comment>
<comment type="sequence caution" evidence="3">
    <conflict type="erroneous gene model prediction">
        <sequence resource="EMBL-CDS" id="CBF77490"/>
    </conflict>
    <text>The predicted gene ANIA_04452 has been split into 2 genes: ANIA_04452-1 and ANIA_04452-2.</text>
</comment>
<comment type="sequence caution" evidence="3">
    <conflict type="erroneous gene model prediction">
        <sequence resource="EMBL-CDS" id="EAA60217"/>
    </conflict>
    <text>The predicted gene ANIA_04452 has been split into 2 genes: ANIA_04452-1 and ANIA_04452-2.</text>
</comment>
<dbReference type="EMBL" id="AACD01000077">
    <property type="protein sequence ID" value="EAA60217.1"/>
    <property type="status" value="ALT_SEQ"/>
    <property type="molecule type" value="Genomic_DNA"/>
</dbReference>
<dbReference type="EMBL" id="BN001303">
    <property type="protein sequence ID" value="CBF77490.1"/>
    <property type="status" value="ALT_SEQ"/>
    <property type="molecule type" value="Genomic_DNA"/>
</dbReference>
<dbReference type="SMR" id="P9WEU2"/>
<dbReference type="FunCoup" id="P9WEU2">
    <property type="interactions" value="845"/>
</dbReference>
<dbReference type="InParanoid" id="P9WEU2"/>
<dbReference type="Proteomes" id="UP000000560">
    <property type="component" value="Chromosome III"/>
</dbReference>
<dbReference type="GO" id="GO:0022625">
    <property type="term" value="C:cytosolic large ribosomal subunit"/>
    <property type="evidence" value="ECO:0000318"/>
    <property type="project" value="GO_Central"/>
</dbReference>
<dbReference type="GO" id="GO:0003735">
    <property type="term" value="F:structural constituent of ribosome"/>
    <property type="evidence" value="ECO:0000318"/>
    <property type="project" value="GO_Central"/>
</dbReference>
<dbReference type="GO" id="GO:0002181">
    <property type="term" value="P:cytoplasmic translation"/>
    <property type="evidence" value="ECO:0000318"/>
    <property type="project" value="GO_Central"/>
</dbReference>
<dbReference type="FunFam" id="1.10.10.1760:FF:000003">
    <property type="entry name" value="60S ribosomal protein L36"/>
    <property type="match status" value="1"/>
</dbReference>
<dbReference type="Gene3D" id="1.10.10.1760">
    <property type="entry name" value="60S ribosomal protein L36"/>
    <property type="match status" value="1"/>
</dbReference>
<dbReference type="InterPro" id="IPR000509">
    <property type="entry name" value="Ribosomal_eL36"/>
</dbReference>
<dbReference type="InterPro" id="IPR038097">
    <property type="entry name" value="Ribosomal_eL36_sf"/>
</dbReference>
<dbReference type="PANTHER" id="PTHR10114">
    <property type="entry name" value="60S RIBOSOMAL PROTEIN L36"/>
    <property type="match status" value="1"/>
</dbReference>
<dbReference type="Pfam" id="PF01158">
    <property type="entry name" value="Ribosomal_L36e"/>
    <property type="match status" value="1"/>
</dbReference>
<dbReference type="PROSITE" id="PS01190">
    <property type="entry name" value="RIBOSOMAL_L36E"/>
    <property type="match status" value="1"/>
</dbReference>
<feature type="chain" id="PRO_0000453677" description="Large ribosomal subunit protein eL36">
    <location>
        <begin position="1"/>
        <end position="105"/>
    </location>
</feature>
<feature type="region of interest" description="Disordered" evidence="2">
    <location>
        <begin position="1"/>
        <end position="36"/>
    </location>
</feature>
<feature type="compositionally biased region" description="Basic residues" evidence="2">
    <location>
        <begin position="27"/>
        <end position="36"/>
    </location>
</feature>
<accession>P9WEU2</accession>
<accession>A0A1U8QU64</accession>
<accession>C8V8I8</accession>
<accession>Q5B4S8</accession>
<evidence type="ECO:0000250" key="1">
    <source>
        <dbReference type="UniProtKB" id="O14455"/>
    </source>
</evidence>
<evidence type="ECO:0000256" key="2">
    <source>
        <dbReference type="SAM" id="MobiDB-lite"/>
    </source>
</evidence>
<evidence type="ECO:0000305" key="3"/>
<sequence>MAQERSGIAVGLNKGHKTTPLNTPKTRISRSKGKASRRTAFVRDIAREVVGLAPYERRVIELLRNAQDKRARKLAKKRLGTFTRGKRKVEDMQRVIAEARRVGAH</sequence>